<feature type="chain" id="PRO_1000070362" description="Pyridoxal 5'-phosphate synthase subunit PdxS">
    <location>
        <begin position="1"/>
        <end position="295"/>
    </location>
</feature>
<feature type="active site" description="Schiff-base intermediate with D-ribose 5-phosphate" evidence="1">
    <location>
        <position position="82"/>
    </location>
</feature>
<feature type="binding site" evidence="1">
    <location>
        <position position="25"/>
    </location>
    <ligand>
        <name>D-ribose 5-phosphate</name>
        <dbReference type="ChEBI" id="CHEBI:78346"/>
    </ligand>
</feature>
<feature type="binding site" evidence="1">
    <location>
        <position position="154"/>
    </location>
    <ligand>
        <name>D-ribose 5-phosphate</name>
        <dbReference type="ChEBI" id="CHEBI:78346"/>
    </ligand>
</feature>
<feature type="binding site" evidence="1">
    <location>
        <position position="166"/>
    </location>
    <ligand>
        <name>D-glyceraldehyde 3-phosphate</name>
        <dbReference type="ChEBI" id="CHEBI:59776"/>
    </ligand>
</feature>
<feature type="binding site" evidence="1">
    <location>
        <position position="215"/>
    </location>
    <ligand>
        <name>D-ribose 5-phosphate</name>
        <dbReference type="ChEBI" id="CHEBI:78346"/>
    </ligand>
</feature>
<feature type="binding site" evidence="1">
    <location>
        <begin position="236"/>
        <end position="237"/>
    </location>
    <ligand>
        <name>D-ribose 5-phosphate</name>
        <dbReference type="ChEBI" id="CHEBI:78346"/>
    </ligand>
</feature>
<comment type="function">
    <text evidence="1">Catalyzes the formation of pyridoxal 5'-phosphate from ribose 5-phosphate (RBP), glyceraldehyde 3-phosphate (G3P) and ammonia. The ammonia is provided by the PdxT subunit. Can also use ribulose 5-phosphate and dihydroxyacetone phosphate as substrates, resulting from enzyme-catalyzed isomerization of RBP and G3P, respectively.</text>
</comment>
<comment type="catalytic activity">
    <reaction evidence="1">
        <text>aldehydo-D-ribose 5-phosphate + D-glyceraldehyde 3-phosphate + L-glutamine = pyridoxal 5'-phosphate + L-glutamate + phosphate + 3 H2O + H(+)</text>
        <dbReference type="Rhea" id="RHEA:31507"/>
        <dbReference type="ChEBI" id="CHEBI:15377"/>
        <dbReference type="ChEBI" id="CHEBI:15378"/>
        <dbReference type="ChEBI" id="CHEBI:29985"/>
        <dbReference type="ChEBI" id="CHEBI:43474"/>
        <dbReference type="ChEBI" id="CHEBI:58273"/>
        <dbReference type="ChEBI" id="CHEBI:58359"/>
        <dbReference type="ChEBI" id="CHEBI:59776"/>
        <dbReference type="ChEBI" id="CHEBI:597326"/>
        <dbReference type="EC" id="4.3.3.6"/>
    </reaction>
</comment>
<comment type="pathway">
    <text evidence="1">Cofactor biosynthesis; pyridoxal 5'-phosphate biosynthesis.</text>
</comment>
<comment type="subunit">
    <text evidence="1">In the presence of PdxT, forms a dodecamer of heterodimers.</text>
</comment>
<comment type="similarity">
    <text evidence="1">Belongs to the PdxS/SNZ family.</text>
</comment>
<sequence>MTKILGSDLIKRGMAQMQKGGVIMDVVNAEQARIAEAAGAVAVMALERVPSDIRAAGGVARMANTAIVREVMEAVSIPVMAKARIGHIVEARVLEAMGVDYIDESEVLTPADEEFHLLKSDYTVPFVCGCRDLGEALRRIGEGASMLRTKGEPGTGNVVEAVRHLRKVNAQLRKVINMSHDELMTEAKHLGAPFELLLQIKTLGKLPVVNFAAGGIATPADAALMMELGADGVFVGSGIFKSENPEKFAKAIVQATTHYQDYDLIARLSADLGEPMRGLEISELAVQDRMQERGW</sequence>
<accession>A3MZT8</accession>
<name>PDXS_ACTP2</name>
<reference key="1">
    <citation type="journal article" date="2008" name="J. Bacteriol.">
        <title>The complete genome sequence of Actinobacillus pleuropneumoniae L20 (serotype 5b).</title>
        <authorList>
            <person name="Foote S.J."/>
            <person name="Bosse J.T."/>
            <person name="Bouevitch A.B."/>
            <person name="Langford P.R."/>
            <person name="Young N.M."/>
            <person name="Nash J.H.E."/>
        </authorList>
    </citation>
    <scope>NUCLEOTIDE SEQUENCE [LARGE SCALE GENOMIC DNA]</scope>
    <source>
        <strain>L20</strain>
    </source>
</reference>
<evidence type="ECO:0000255" key="1">
    <source>
        <dbReference type="HAMAP-Rule" id="MF_01824"/>
    </source>
</evidence>
<dbReference type="EC" id="4.3.3.6" evidence="1"/>
<dbReference type="EMBL" id="CP000569">
    <property type="protein sequence ID" value="ABN73674.1"/>
    <property type="molecule type" value="Genomic_DNA"/>
</dbReference>
<dbReference type="RefSeq" id="WP_005600689.1">
    <property type="nucleotide sequence ID" value="NC_009053.1"/>
</dbReference>
<dbReference type="SMR" id="A3MZT8"/>
<dbReference type="STRING" id="416269.APL_0572"/>
<dbReference type="EnsemblBacteria" id="ABN73674">
    <property type="protein sequence ID" value="ABN73674"/>
    <property type="gene ID" value="APL_0572"/>
</dbReference>
<dbReference type="KEGG" id="apl:APL_0572"/>
<dbReference type="eggNOG" id="COG0214">
    <property type="taxonomic scope" value="Bacteria"/>
</dbReference>
<dbReference type="HOGENOM" id="CLU_055352_1_0_6"/>
<dbReference type="UniPathway" id="UPA00245"/>
<dbReference type="Proteomes" id="UP000001432">
    <property type="component" value="Chromosome"/>
</dbReference>
<dbReference type="GO" id="GO:0036381">
    <property type="term" value="F:pyridoxal 5'-phosphate synthase (glutamine hydrolysing) activity"/>
    <property type="evidence" value="ECO:0007669"/>
    <property type="project" value="UniProtKB-UniRule"/>
</dbReference>
<dbReference type="GO" id="GO:0006520">
    <property type="term" value="P:amino acid metabolic process"/>
    <property type="evidence" value="ECO:0007669"/>
    <property type="project" value="TreeGrafter"/>
</dbReference>
<dbReference type="GO" id="GO:0042823">
    <property type="term" value="P:pyridoxal phosphate biosynthetic process"/>
    <property type="evidence" value="ECO:0007669"/>
    <property type="project" value="UniProtKB-UniRule"/>
</dbReference>
<dbReference type="GO" id="GO:0008615">
    <property type="term" value="P:pyridoxine biosynthetic process"/>
    <property type="evidence" value="ECO:0007669"/>
    <property type="project" value="TreeGrafter"/>
</dbReference>
<dbReference type="CDD" id="cd04727">
    <property type="entry name" value="pdxS"/>
    <property type="match status" value="1"/>
</dbReference>
<dbReference type="FunFam" id="3.20.20.70:FF:000001">
    <property type="entry name" value="Pyridoxine biosynthesis protein PDX1"/>
    <property type="match status" value="1"/>
</dbReference>
<dbReference type="Gene3D" id="3.20.20.70">
    <property type="entry name" value="Aldolase class I"/>
    <property type="match status" value="1"/>
</dbReference>
<dbReference type="HAMAP" id="MF_01824">
    <property type="entry name" value="PdxS"/>
    <property type="match status" value="1"/>
</dbReference>
<dbReference type="InterPro" id="IPR013785">
    <property type="entry name" value="Aldolase_TIM"/>
</dbReference>
<dbReference type="InterPro" id="IPR001852">
    <property type="entry name" value="PdxS/SNZ"/>
</dbReference>
<dbReference type="InterPro" id="IPR033755">
    <property type="entry name" value="PdxS/SNZ_N"/>
</dbReference>
<dbReference type="InterPro" id="IPR011060">
    <property type="entry name" value="RibuloseP-bd_barrel"/>
</dbReference>
<dbReference type="NCBIfam" id="NF003215">
    <property type="entry name" value="PRK04180.1"/>
    <property type="match status" value="1"/>
</dbReference>
<dbReference type="NCBIfam" id="TIGR00343">
    <property type="entry name" value="pyridoxal 5'-phosphate synthase lyase subunit PdxS"/>
    <property type="match status" value="1"/>
</dbReference>
<dbReference type="PANTHER" id="PTHR31829">
    <property type="entry name" value="PYRIDOXAL 5'-PHOSPHATE SYNTHASE SUBUNIT SNZ1-RELATED"/>
    <property type="match status" value="1"/>
</dbReference>
<dbReference type="PANTHER" id="PTHR31829:SF0">
    <property type="entry name" value="PYRIDOXAL 5'-PHOSPHATE SYNTHASE SUBUNIT SNZ1-RELATED"/>
    <property type="match status" value="1"/>
</dbReference>
<dbReference type="Pfam" id="PF01680">
    <property type="entry name" value="SOR_SNZ"/>
    <property type="match status" value="1"/>
</dbReference>
<dbReference type="PIRSF" id="PIRSF029271">
    <property type="entry name" value="Pdx1"/>
    <property type="match status" value="1"/>
</dbReference>
<dbReference type="SUPFAM" id="SSF51366">
    <property type="entry name" value="Ribulose-phoshate binding barrel"/>
    <property type="match status" value="1"/>
</dbReference>
<dbReference type="PROSITE" id="PS01235">
    <property type="entry name" value="PDXS_SNZ_1"/>
    <property type="match status" value="1"/>
</dbReference>
<dbReference type="PROSITE" id="PS51129">
    <property type="entry name" value="PDXS_SNZ_2"/>
    <property type="match status" value="1"/>
</dbReference>
<protein>
    <recommendedName>
        <fullName evidence="1">Pyridoxal 5'-phosphate synthase subunit PdxS</fullName>
        <shortName evidence="1">PLP synthase subunit PdxS</shortName>
        <ecNumber evidence="1">4.3.3.6</ecNumber>
    </recommendedName>
    <alternativeName>
        <fullName evidence="1">Pdx1</fullName>
    </alternativeName>
</protein>
<organism>
    <name type="scientific">Actinobacillus pleuropneumoniae serotype 5b (strain L20)</name>
    <dbReference type="NCBI Taxonomy" id="416269"/>
    <lineage>
        <taxon>Bacteria</taxon>
        <taxon>Pseudomonadati</taxon>
        <taxon>Pseudomonadota</taxon>
        <taxon>Gammaproteobacteria</taxon>
        <taxon>Pasteurellales</taxon>
        <taxon>Pasteurellaceae</taxon>
        <taxon>Actinobacillus</taxon>
    </lineage>
</organism>
<proteinExistence type="inferred from homology"/>
<keyword id="KW-0456">Lyase</keyword>
<keyword id="KW-0663">Pyridoxal phosphate</keyword>
<keyword id="KW-1185">Reference proteome</keyword>
<keyword id="KW-0704">Schiff base</keyword>
<gene>
    <name evidence="1" type="primary">pdxS</name>
    <name type="ordered locus">APL_0572</name>
</gene>